<feature type="chain" id="PRO_1000063891" description="Exoribonuclease 2">
    <location>
        <begin position="1"/>
        <end position="659"/>
    </location>
</feature>
<feature type="domain" description="RNB" evidence="1">
    <location>
        <begin position="189"/>
        <end position="531"/>
    </location>
</feature>
<feature type="domain" description="S1 motif" evidence="2">
    <location>
        <begin position="576"/>
        <end position="658"/>
    </location>
</feature>
<name>RNB_HAEI8</name>
<protein>
    <recommendedName>
        <fullName evidence="2">Exoribonuclease 2</fullName>
        <ecNumber evidence="2">3.1.13.1</ecNumber>
    </recommendedName>
    <alternativeName>
        <fullName evidence="2">Exoribonuclease II</fullName>
        <shortName evidence="2">RNase II</shortName>
        <shortName evidence="2">Ribonuclease II</shortName>
    </alternativeName>
</protein>
<dbReference type="EC" id="3.1.13.1" evidence="2"/>
<dbReference type="EMBL" id="CP000057">
    <property type="protein sequence ID" value="AAX88782.1"/>
    <property type="molecule type" value="Genomic_DNA"/>
</dbReference>
<dbReference type="RefSeq" id="WP_005688061.1">
    <property type="nucleotide sequence ID" value="NC_007146.2"/>
</dbReference>
<dbReference type="SMR" id="Q4QJL5"/>
<dbReference type="GeneID" id="93220739"/>
<dbReference type="KEGG" id="hit:NTHI2041"/>
<dbReference type="HOGENOM" id="CLU_002333_7_3_6"/>
<dbReference type="Proteomes" id="UP000002525">
    <property type="component" value="Chromosome"/>
</dbReference>
<dbReference type="GO" id="GO:0005829">
    <property type="term" value="C:cytosol"/>
    <property type="evidence" value="ECO:0007669"/>
    <property type="project" value="UniProtKB-ARBA"/>
</dbReference>
<dbReference type="GO" id="GO:0008859">
    <property type="term" value="F:exoribonuclease II activity"/>
    <property type="evidence" value="ECO:0007669"/>
    <property type="project" value="UniProtKB-UniRule"/>
</dbReference>
<dbReference type="GO" id="GO:0003723">
    <property type="term" value="F:RNA binding"/>
    <property type="evidence" value="ECO:0007669"/>
    <property type="project" value="UniProtKB-KW"/>
</dbReference>
<dbReference type="GO" id="GO:0006402">
    <property type="term" value="P:mRNA catabolic process"/>
    <property type="evidence" value="ECO:0007669"/>
    <property type="project" value="UniProtKB-UniRule"/>
</dbReference>
<dbReference type="FunFam" id="2.40.50.640:FF:000003">
    <property type="entry name" value="Exoribonuclease 2"/>
    <property type="match status" value="1"/>
</dbReference>
<dbReference type="Gene3D" id="2.40.50.640">
    <property type="match status" value="1"/>
</dbReference>
<dbReference type="Gene3D" id="2.40.50.140">
    <property type="entry name" value="Nucleic acid-binding proteins"/>
    <property type="match status" value="2"/>
</dbReference>
<dbReference type="HAMAP" id="MF_01036">
    <property type="entry name" value="RNase_II"/>
    <property type="match status" value="1"/>
</dbReference>
<dbReference type="InterPro" id="IPR011129">
    <property type="entry name" value="CSD"/>
</dbReference>
<dbReference type="InterPro" id="IPR012340">
    <property type="entry name" value="NA-bd_OB-fold"/>
</dbReference>
<dbReference type="InterPro" id="IPR013223">
    <property type="entry name" value="RNase_B_OB_dom"/>
</dbReference>
<dbReference type="InterPro" id="IPR011804">
    <property type="entry name" value="RNase_II"/>
</dbReference>
<dbReference type="InterPro" id="IPR001900">
    <property type="entry name" value="RNase_II/R"/>
</dbReference>
<dbReference type="InterPro" id="IPR022966">
    <property type="entry name" value="RNase_II/R_CS"/>
</dbReference>
<dbReference type="InterPro" id="IPR004476">
    <property type="entry name" value="RNase_II/RNase_R"/>
</dbReference>
<dbReference type="InterPro" id="IPR050180">
    <property type="entry name" value="RNR_Ribonuclease"/>
</dbReference>
<dbReference type="InterPro" id="IPR003029">
    <property type="entry name" value="S1_domain"/>
</dbReference>
<dbReference type="NCBIfam" id="TIGR00358">
    <property type="entry name" value="3_prime_RNase"/>
    <property type="match status" value="1"/>
</dbReference>
<dbReference type="NCBIfam" id="NF003455">
    <property type="entry name" value="PRK05054.1"/>
    <property type="match status" value="1"/>
</dbReference>
<dbReference type="NCBIfam" id="TIGR02062">
    <property type="entry name" value="RNase_B"/>
    <property type="match status" value="1"/>
</dbReference>
<dbReference type="PANTHER" id="PTHR23355:SF37">
    <property type="entry name" value="EXORIBONUCLEASE 2"/>
    <property type="match status" value="1"/>
</dbReference>
<dbReference type="PANTHER" id="PTHR23355">
    <property type="entry name" value="RIBONUCLEASE"/>
    <property type="match status" value="1"/>
</dbReference>
<dbReference type="Pfam" id="PF08206">
    <property type="entry name" value="OB_RNB"/>
    <property type="match status" value="1"/>
</dbReference>
<dbReference type="Pfam" id="PF00773">
    <property type="entry name" value="RNB"/>
    <property type="match status" value="1"/>
</dbReference>
<dbReference type="Pfam" id="PF00575">
    <property type="entry name" value="S1"/>
    <property type="match status" value="1"/>
</dbReference>
<dbReference type="SMART" id="SM00357">
    <property type="entry name" value="CSP"/>
    <property type="match status" value="1"/>
</dbReference>
<dbReference type="SMART" id="SM00955">
    <property type="entry name" value="RNB"/>
    <property type="match status" value="1"/>
</dbReference>
<dbReference type="SMART" id="SM00316">
    <property type="entry name" value="S1"/>
    <property type="match status" value="1"/>
</dbReference>
<dbReference type="SUPFAM" id="SSF50249">
    <property type="entry name" value="Nucleic acid-binding proteins"/>
    <property type="match status" value="4"/>
</dbReference>
<dbReference type="PROSITE" id="PS01175">
    <property type="entry name" value="RIBONUCLEASE_II"/>
    <property type="match status" value="1"/>
</dbReference>
<dbReference type="PROSITE" id="PS50126">
    <property type="entry name" value="S1"/>
    <property type="match status" value="1"/>
</dbReference>
<organism>
    <name type="scientific">Haemophilus influenzae (strain 86-028NP)</name>
    <dbReference type="NCBI Taxonomy" id="281310"/>
    <lineage>
        <taxon>Bacteria</taxon>
        <taxon>Pseudomonadati</taxon>
        <taxon>Pseudomonadota</taxon>
        <taxon>Gammaproteobacteria</taxon>
        <taxon>Pasteurellales</taxon>
        <taxon>Pasteurellaceae</taxon>
        <taxon>Haemophilus</taxon>
    </lineage>
</organism>
<reference key="1">
    <citation type="journal article" date="2005" name="J. Bacteriol.">
        <title>Genomic sequence of an otitis media isolate of nontypeable Haemophilus influenzae: comparative study with H. influenzae serotype d, strain KW20.</title>
        <authorList>
            <person name="Harrison A."/>
            <person name="Dyer D.W."/>
            <person name="Gillaspy A."/>
            <person name="Ray W.C."/>
            <person name="Mungur R."/>
            <person name="Carson M.B."/>
            <person name="Zhong H."/>
            <person name="Gipson J."/>
            <person name="Gipson M."/>
            <person name="Johnson L.S."/>
            <person name="Lewis L."/>
            <person name="Bakaletz L.O."/>
            <person name="Munson R.S. Jr."/>
        </authorList>
    </citation>
    <scope>NUCLEOTIDE SEQUENCE [LARGE SCALE GENOMIC DNA]</scope>
    <source>
        <strain>86-028NP</strain>
    </source>
</reference>
<evidence type="ECO:0000255" key="1"/>
<evidence type="ECO:0000255" key="2">
    <source>
        <dbReference type="HAMAP-Rule" id="MF_01036"/>
    </source>
</evidence>
<accession>Q4QJL5</accession>
<gene>
    <name evidence="2" type="primary">rnb</name>
    <name type="ordered locus">NTHI2041</name>
</gene>
<proteinExistence type="inferred from homology"/>
<comment type="function">
    <text evidence="2">Involved in mRNA degradation. Hydrolyzes single-stranded polyribonucleotides processively in the 3' to 5' direction.</text>
</comment>
<comment type="catalytic activity">
    <reaction evidence="2">
        <text>Exonucleolytic cleavage in the 3'- to 5'-direction to yield nucleoside 5'-phosphates.</text>
        <dbReference type="EC" id="3.1.13.1"/>
    </reaction>
</comment>
<comment type="subcellular location">
    <subcellularLocation>
        <location evidence="2">Cytoplasm</location>
    </subcellularLocation>
</comment>
<comment type="similarity">
    <text evidence="2">Belongs to the RNR ribonuclease family. RNase II subfamily.</text>
</comment>
<sequence>MFQDNPLLAQLKQQIHDSKEQVEGVVKSTDKAYGFLECDKKTYFIAPPSMKKVMHGDKIKATIEKQGDKEQAEPEALIEPMLTRFIAKVRFNKDKKLQVLVDHPSINQPIGAQQAKSVKEELQEGDWVVANLKTHPLRDDRFFYATINQFICRADDELAPWWVTLARHEQSRYPVQGAEHYEMLDQKTRENLTALHFVTIDSESTMDMDDALYIEPIAQNSTQTGWKLVVAIADPTAYIALDSQIEQEAKQRCFTNYLPGFNIPMLPRELSDELCSLIANETRPALVCYIETDLAGNITAKPHFVSAYVQSKAKLAYNKVSDYLEQADNAWQPETPETAQQIHWLHQFTKARIQWHKTHSLLFKEKPDYAFVLAENGKVQEIKAEYRRIANQIVEEAMIIANICAAQFLHEQAKTGIFNTHSGFDKKFLENAHHFLMANLANEQNQTELAERYSVENLATLNGYCQMRHDIEPIESDYLELRLRRYLTFAEFKSELAPHFGLGLEGYATWTSPIRKYSDMVNHRLIKAVLAKQPYEKTQNDVLARLQEARRQNRLVERDIADWLYCRYLAPKVAENVEFNAEVQDVMRGGLRVQLLENGASMFIPASTLHNNKEEMQVNSDEIALYIKGERTYKIGDIVKVKLTEVKEATRSIVGEILQ</sequence>
<keyword id="KW-0963">Cytoplasm</keyword>
<keyword id="KW-0269">Exonuclease</keyword>
<keyword id="KW-0378">Hydrolase</keyword>
<keyword id="KW-0540">Nuclease</keyword>
<keyword id="KW-0694">RNA-binding</keyword>